<accession>Q8ZNE4</accession>
<feature type="chain" id="PRO_0000249448" description="NADH-quinone oxidoreductase subunit N">
    <location>
        <begin position="1"/>
        <end position="485"/>
    </location>
</feature>
<feature type="transmembrane region" description="Helical" evidence="1">
    <location>
        <begin position="8"/>
        <end position="28"/>
    </location>
</feature>
<feature type="transmembrane region" description="Helical" evidence="1">
    <location>
        <begin position="35"/>
        <end position="55"/>
    </location>
</feature>
<feature type="transmembrane region" description="Helical" evidence="1">
    <location>
        <begin position="71"/>
        <end position="91"/>
    </location>
</feature>
<feature type="transmembrane region" description="Helical" evidence="1">
    <location>
        <begin position="105"/>
        <end position="125"/>
    </location>
</feature>
<feature type="transmembrane region" description="Helical" evidence="1">
    <location>
        <begin position="127"/>
        <end position="147"/>
    </location>
</feature>
<feature type="transmembrane region" description="Helical" evidence="1">
    <location>
        <begin position="159"/>
        <end position="179"/>
    </location>
</feature>
<feature type="transmembrane region" description="Helical" evidence="1">
    <location>
        <begin position="203"/>
        <end position="223"/>
    </location>
</feature>
<feature type="transmembrane region" description="Helical" evidence="1">
    <location>
        <begin position="235"/>
        <end position="255"/>
    </location>
</feature>
<feature type="transmembrane region" description="Helical" evidence="1">
    <location>
        <begin position="271"/>
        <end position="291"/>
    </location>
</feature>
<feature type="transmembrane region" description="Helical" evidence="1">
    <location>
        <begin position="297"/>
        <end position="317"/>
    </location>
</feature>
<feature type="transmembrane region" description="Helical" evidence="1">
    <location>
        <begin position="326"/>
        <end position="346"/>
    </location>
</feature>
<feature type="transmembrane region" description="Helical" evidence="1">
    <location>
        <begin position="373"/>
        <end position="393"/>
    </location>
</feature>
<feature type="transmembrane region" description="Helical" evidence="1">
    <location>
        <begin position="408"/>
        <end position="430"/>
    </location>
</feature>
<feature type="transmembrane region" description="Helical" evidence="1">
    <location>
        <begin position="455"/>
        <end position="475"/>
    </location>
</feature>
<dbReference type="EC" id="7.1.1.-" evidence="1"/>
<dbReference type="EMBL" id="AE006468">
    <property type="protein sequence ID" value="AAL21217.1"/>
    <property type="status" value="ALT_INIT"/>
    <property type="molecule type" value="Genomic_DNA"/>
</dbReference>
<dbReference type="RefSeq" id="NP_461258.3">
    <property type="nucleotide sequence ID" value="NC_003197.2"/>
</dbReference>
<dbReference type="RefSeq" id="WP_022742766.1">
    <property type="nucleotide sequence ID" value="NC_003197.2"/>
</dbReference>
<dbReference type="SMR" id="Q8ZNE4"/>
<dbReference type="STRING" id="99287.STM2316"/>
<dbReference type="PaxDb" id="99287-STM2316"/>
<dbReference type="GeneID" id="1253838"/>
<dbReference type="KEGG" id="stm:STM2316"/>
<dbReference type="PATRIC" id="fig|99287.12.peg.2453"/>
<dbReference type="HOGENOM" id="CLU_007100_1_5_6"/>
<dbReference type="PhylomeDB" id="Q8ZNE4"/>
<dbReference type="BioCyc" id="SENT99287:STM2316-MONOMER"/>
<dbReference type="Proteomes" id="UP000001014">
    <property type="component" value="Chromosome"/>
</dbReference>
<dbReference type="GO" id="GO:0005886">
    <property type="term" value="C:plasma membrane"/>
    <property type="evidence" value="ECO:0007669"/>
    <property type="project" value="UniProtKB-SubCell"/>
</dbReference>
<dbReference type="GO" id="GO:0008137">
    <property type="term" value="F:NADH dehydrogenase (ubiquinone) activity"/>
    <property type="evidence" value="ECO:0007669"/>
    <property type="project" value="InterPro"/>
</dbReference>
<dbReference type="GO" id="GO:0050136">
    <property type="term" value="F:NADH:ubiquinone reductase (non-electrogenic) activity"/>
    <property type="evidence" value="ECO:0007669"/>
    <property type="project" value="UniProtKB-UniRule"/>
</dbReference>
<dbReference type="GO" id="GO:0048038">
    <property type="term" value="F:quinone binding"/>
    <property type="evidence" value="ECO:0007669"/>
    <property type="project" value="UniProtKB-KW"/>
</dbReference>
<dbReference type="GO" id="GO:0042773">
    <property type="term" value="P:ATP synthesis coupled electron transport"/>
    <property type="evidence" value="ECO:0007669"/>
    <property type="project" value="InterPro"/>
</dbReference>
<dbReference type="HAMAP" id="MF_00445">
    <property type="entry name" value="NDH1_NuoN_1"/>
    <property type="match status" value="1"/>
</dbReference>
<dbReference type="InterPro" id="IPR010096">
    <property type="entry name" value="NADH-Q_OxRdtase_suN/2"/>
</dbReference>
<dbReference type="InterPro" id="IPR001750">
    <property type="entry name" value="ND/Mrp_TM"/>
</dbReference>
<dbReference type="NCBIfam" id="TIGR01770">
    <property type="entry name" value="NDH_I_N"/>
    <property type="match status" value="1"/>
</dbReference>
<dbReference type="NCBIfam" id="NF004439">
    <property type="entry name" value="PRK05777.1-1"/>
    <property type="match status" value="1"/>
</dbReference>
<dbReference type="PANTHER" id="PTHR22773">
    <property type="entry name" value="NADH DEHYDROGENASE"/>
    <property type="match status" value="1"/>
</dbReference>
<dbReference type="Pfam" id="PF00361">
    <property type="entry name" value="Proton_antipo_M"/>
    <property type="match status" value="1"/>
</dbReference>
<comment type="function">
    <text evidence="1">NDH-1 shuttles electrons from NADH, via FMN and iron-sulfur (Fe-S) centers, to quinones in the respiratory chain. The immediate electron acceptor for the enzyme in this species is believed to be ubiquinone. Couples the redox reaction to proton translocation (for every two electrons transferred, four hydrogen ions are translocated across the cytoplasmic membrane), and thus conserves the redox energy in a proton gradient.</text>
</comment>
<comment type="catalytic activity">
    <reaction evidence="1">
        <text>a quinone + NADH + 5 H(+)(in) = a quinol + NAD(+) + 4 H(+)(out)</text>
        <dbReference type="Rhea" id="RHEA:57888"/>
        <dbReference type="ChEBI" id="CHEBI:15378"/>
        <dbReference type="ChEBI" id="CHEBI:24646"/>
        <dbReference type="ChEBI" id="CHEBI:57540"/>
        <dbReference type="ChEBI" id="CHEBI:57945"/>
        <dbReference type="ChEBI" id="CHEBI:132124"/>
    </reaction>
</comment>
<comment type="subunit">
    <text evidence="1">NDH-1 is composed of 13 different subunits. Subunits NuoA, H, J, K, L, M, N constitute the membrane sector of the complex.</text>
</comment>
<comment type="subcellular location">
    <subcellularLocation>
        <location evidence="1">Cell inner membrane</location>
        <topology evidence="1">Multi-pass membrane protein</topology>
    </subcellularLocation>
</comment>
<comment type="similarity">
    <text evidence="1">Belongs to the complex I subunit 2 family.</text>
</comment>
<comment type="sequence caution" evidence="2">
    <conflict type="erroneous initiation">
        <sequence resource="EMBL-CDS" id="AAL21217"/>
    </conflict>
</comment>
<reference key="1">
    <citation type="journal article" date="2001" name="Nature">
        <title>Complete genome sequence of Salmonella enterica serovar Typhimurium LT2.</title>
        <authorList>
            <person name="McClelland M."/>
            <person name="Sanderson K.E."/>
            <person name="Spieth J."/>
            <person name="Clifton S.W."/>
            <person name="Latreille P."/>
            <person name="Courtney L."/>
            <person name="Porwollik S."/>
            <person name="Ali J."/>
            <person name="Dante M."/>
            <person name="Du F."/>
            <person name="Hou S."/>
            <person name="Layman D."/>
            <person name="Leonard S."/>
            <person name="Nguyen C."/>
            <person name="Scott K."/>
            <person name="Holmes A."/>
            <person name="Grewal N."/>
            <person name="Mulvaney E."/>
            <person name="Ryan E."/>
            <person name="Sun H."/>
            <person name="Florea L."/>
            <person name="Miller W."/>
            <person name="Stoneking T."/>
            <person name="Nhan M."/>
            <person name="Waterston R."/>
            <person name="Wilson R.K."/>
        </authorList>
    </citation>
    <scope>NUCLEOTIDE SEQUENCE [LARGE SCALE GENOMIC DNA]</scope>
    <source>
        <strain>LT2 / SGSC1412 / ATCC 700720</strain>
    </source>
</reference>
<keyword id="KW-0997">Cell inner membrane</keyword>
<keyword id="KW-1003">Cell membrane</keyword>
<keyword id="KW-0472">Membrane</keyword>
<keyword id="KW-0520">NAD</keyword>
<keyword id="KW-0874">Quinone</keyword>
<keyword id="KW-1185">Reference proteome</keyword>
<keyword id="KW-1278">Translocase</keyword>
<keyword id="KW-0812">Transmembrane</keyword>
<keyword id="KW-1133">Transmembrane helix</keyword>
<keyword id="KW-0813">Transport</keyword>
<keyword id="KW-0830">Ubiquinone</keyword>
<organism>
    <name type="scientific">Salmonella typhimurium (strain LT2 / SGSC1412 / ATCC 700720)</name>
    <dbReference type="NCBI Taxonomy" id="99287"/>
    <lineage>
        <taxon>Bacteria</taxon>
        <taxon>Pseudomonadati</taxon>
        <taxon>Pseudomonadota</taxon>
        <taxon>Gammaproteobacteria</taxon>
        <taxon>Enterobacterales</taxon>
        <taxon>Enterobacteriaceae</taxon>
        <taxon>Salmonella</taxon>
    </lineage>
</organism>
<sequence length="485" mass="52013">MTITPQHLIALLPLLIVGLTVVVVMLSIAWRRNHFLNATLSVIGLNAALVSLWFVGQAGAMDVTPLMRVDGFAMLYTGLVLLASLATCTFAYPWLEGYNDNQEEFYLLVLIASLGGILLANANHLAALFLGIELISLPLFGLIGYAFRQKRSLEASIKYTILSAAASSFLLFGMALVYAQSGNLSFEALGKSLGDGMLHEPLLLAGFGLMIVGLGFKLSLVPFHLWTPDVYQGAPAPVSTFLATASKIAIFGVVMRLFLYAPVGDSEAVRVVLGIIAFASIIFGNLMALSQTNIKRLLGYSSISHLGYLLVALIALQSGEMSMEAVGVYLAGYLFSSLGAFGVVSLMSSPFRGPDADSLYSYRGLFWHRPVLAAVMTVMMLSLAGIPMTLGFIGKFYVLAVGVQASLWWLVAAVVVGSAIGLYYYLRVAVSLYLHAPQQPGRDAPTNWQYSAGGIVVLISALLVLVLGVWPQPLISLVQLAMPLM</sequence>
<protein>
    <recommendedName>
        <fullName evidence="1">NADH-quinone oxidoreductase subunit N</fullName>
        <ecNumber evidence="1">7.1.1.-</ecNumber>
    </recommendedName>
    <alternativeName>
        <fullName evidence="1">NADH dehydrogenase I subunit N</fullName>
    </alternativeName>
    <alternativeName>
        <fullName evidence="1">NDH-1 subunit N</fullName>
    </alternativeName>
</protein>
<name>NUON_SALTY</name>
<evidence type="ECO:0000255" key="1">
    <source>
        <dbReference type="HAMAP-Rule" id="MF_00445"/>
    </source>
</evidence>
<evidence type="ECO:0000305" key="2"/>
<proteinExistence type="inferred from homology"/>
<gene>
    <name evidence="1" type="primary">nuoN</name>
    <name type="ordered locus">STM2316</name>
</gene>